<evidence type="ECO:0000250" key="1"/>
<evidence type="ECO:0000269" key="2">
    <source>
    </source>
</evidence>
<evidence type="ECO:0000303" key="3">
    <source>
    </source>
</evidence>
<evidence type="ECO:0000305" key="4"/>
<protein>
    <recommendedName>
        <fullName evidence="3">Small ribosomal subunit protein uS17c</fullName>
    </recommendedName>
    <alternativeName>
        <fullName>30S ribosomal protein S17, chloroplastic</fullName>
    </alternativeName>
    <alternativeName>
        <fullName>CS17</fullName>
    </alternativeName>
</protein>
<name>RR17_ARATH</name>
<feature type="transit peptide" description="Chloroplast" evidence="1">
    <location>
        <begin position="1"/>
        <end position="49"/>
    </location>
</feature>
<feature type="chain" id="PRO_0000030620" description="Small ribosomal subunit protein uS17c">
    <location>
        <begin position="50"/>
        <end position="149"/>
    </location>
</feature>
<proteinExistence type="evidence at protein level"/>
<sequence length="149" mass="16282">MITSSLTSSLQALKLSSPFAHGSTPLSSLSKPNSFPNHRMPALVPVIRAMKTMQGRVVCATSDKTVAVEVVRLAPHPKYKRRVRMKKKYQAHDPDNQFKVGDVVRLEKSRPISKTKSFVALPVIARAARKAEAGGDELLGLPLESQQPA</sequence>
<dbReference type="EMBL" id="J05215">
    <property type="protein sequence ID" value="AAA84030.1"/>
    <property type="status" value="ALT_INIT"/>
    <property type="molecule type" value="mRNA"/>
</dbReference>
<dbReference type="EMBL" id="Z11151">
    <property type="protein sequence ID" value="CAA77502.1"/>
    <property type="molecule type" value="Genomic_DNA"/>
</dbReference>
<dbReference type="EMBL" id="AC011717">
    <property type="protein sequence ID" value="AAG52237.1"/>
    <property type="molecule type" value="Genomic_DNA"/>
</dbReference>
<dbReference type="EMBL" id="CP002684">
    <property type="protein sequence ID" value="AEE36313.1"/>
    <property type="molecule type" value="Genomic_DNA"/>
</dbReference>
<dbReference type="EMBL" id="AF386974">
    <property type="protein sequence ID" value="AAK62419.1"/>
    <property type="molecule type" value="mRNA"/>
</dbReference>
<dbReference type="EMBL" id="AY072539">
    <property type="protein sequence ID" value="AAL66954.1"/>
    <property type="molecule type" value="mRNA"/>
</dbReference>
<dbReference type="PIR" id="S20942">
    <property type="entry name" value="R3MU17"/>
</dbReference>
<dbReference type="RefSeq" id="NP_178103.1">
    <property type="nucleotide sequence ID" value="NM_106634.2"/>
</dbReference>
<dbReference type="SMR" id="P16180"/>
<dbReference type="BioGRID" id="29542">
    <property type="interactions" value="3"/>
</dbReference>
<dbReference type="FunCoup" id="P16180">
    <property type="interactions" value="540"/>
</dbReference>
<dbReference type="STRING" id="3702.P16180"/>
<dbReference type="iPTMnet" id="P16180"/>
<dbReference type="PaxDb" id="3702-AT1G79850.1"/>
<dbReference type="ProteomicsDB" id="226745"/>
<dbReference type="EnsemblPlants" id="AT1G79850.1">
    <property type="protein sequence ID" value="AT1G79850.1"/>
    <property type="gene ID" value="AT1G79850"/>
</dbReference>
<dbReference type="GeneID" id="844324"/>
<dbReference type="Gramene" id="AT1G79850.1">
    <property type="protein sequence ID" value="AT1G79850.1"/>
    <property type="gene ID" value="AT1G79850"/>
</dbReference>
<dbReference type="KEGG" id="ath:AT1G79850"/>
<dbReference type="Araport" id="AT1G79850"/>
<dbReference type="TAIR" id="AT1G79850">
    <property type="gene designation" value="RPS17"/>
</dbReference>
<dbReference type="eggNOG" id="KOG1740">
    <property type="taxonomic scope" value="Eukaryota"/>
</dbReference>
<dbReference type="HOGENOM" id="CLU_119752_1_0_1"/>
<dbReference type="InParanoid" id="P16180"/>
<dbReference type="OMA" id="NHRMPAL"/>
<dbReference type="PhylomeDB" id="P16180"/>
<dbReference type="PRO" id="PR:P16180"/>
<dbReference type="Proteomes" id="UP000006548">
    <property type="component" value="Chromosome 1"/>
</dbReference>
<dbReference type="ExpressionAtlas" id="P16180">
    <property type="expression patterns" value="baseline and differential"/>
</dbReference>
<dbReference type="GO" id="GO:0009507">
    <property type="term" value="C:chloroplast"/>
    <property type="evidence" value="ECO:0000314"/>
    <property type="project" value="TAIR"/>
</dbReference>
<dbReference type="GO" id="GO:0009941">
    <property type="term" value="C:chloroplast envelope"/>
    <property type="evidence" value="ECO:0007005"/>
    <property type="project" value="TAIR"/>
</dbReference>
<dbReference type="GO" id="GO:0009570">
    <property type="term" value="C:chloroplast stroma"/>
    <property type="evidence" value="ECO:0007005"/>
    <property type="project" value="TAIR"/>
</dbReference>
<dbReference type="GO" id="GO:0009534">
    <property type="term" value="C:chloroplast thylakoid"/>
    <property type="evidence" value="ECO:0007005"/>
    <property type="project" value="TAIR"/>
</dbReference>
<dbReference type="GO" id="GO:0005739">
    <property type="term" value="C:mitochondrion"/>
    <property type="evidence" value="ECO:0007005"/>
    <property type="project" value="TAIR"/>
</dbReference>
<dbReference type="GO" id="GO:0000312">
    <property type="term" value="C:plastid small ribosomal subunit"/>
    <property type="evidence" value="ECO:0000250"/>
    <property type="project" value="TAIR"/>
</dbReference>
<dbReference type="GO" id="GO:0003729">
    <property type="term" value="F:mRNA binding"/>
    <property type="evidence" value="ECO:0000314"/>
    <property type="project" value="TAIR"/>
</dbReference>
<dbReference type="GO" id="GO:0019843">
    <property type="term" value="F:rRNA binding"/>
    <property type="evidence" value="ECO:0007669"/>
    <property type="project" value="UniProtKB-KW"/>
</dbReference>
<dbReference type="GO" id="GO:0003735">
    <property type="term" value="F:structural constituent of ribosome"/>
    <property type="evidence" value="ECO:0007669"/>
    <property type="project" value="InterPro"/>
</dbReference>
<dbReference type="GO" id="GO:0032544">
    <property type="term" value="P:plastid translation"/>
    <property type="evidence" value="ECO:0000315"/>
    <property type="project" value="TAIR"/>
</dbReference>
<dbReference type="CDD" id="cd00364">
    <property type="entry name" value="Ribosomal_uS17"/>
    <property type="match status" value="1"/>
</dbReference>
<dbReference type="FunFam" id="2.40.50.140:FF:000265">
    <property type="entry name" value="30S ribosomal protein S17, chloroplastic"/>
    <property type="match status" value="1"/>
</dbReference>
<dbReference type="Gene3D" id="2.40.50.140">
    <property type="entry name" value="Nucleic acid-binding proteins"/>
    <property type="match status" value="1"/>
</dbReference>
<dbReference type="HAMAP" id="MF_01345_B">
    <property type="entry name" value="Ribosomal_uS17_B"/>
    <property type="match status" value="1"/>
</dbReference>
<dbReference type="InterPro" id="IPR012340">
    <property type="entry name" value="NA-bd_OB-fold"/>
</dbReference>
<dbReference type="InterPro" id="IPR000266">
    <property type="entry name" value="Ribosomal_uS17"/>
</dbReference>
<dbReference type="InterPro" id="IPR019984">
    <property type="entry name" value="Ribosomal_uS17_bact/chlr"/>
</dbReference>
<dbReference type="InterPro" id="IPR019979">
    <property type="entry name" value="Ribosomal_uS17_CS"/>
</dbReference>
<dbReference type="NCBIfam" id="NF004123">
    <property type="entry name" value="PRK05610.1"/>
    <property type="match status" value="1"/>
</dbReference>
<dbReference type="PANTHER" id="PTHR10744">
    <property type="entry name" value="40S RIBOSOMAL PROTEIN S11 FAMILY MEMBER"/>
    <property type="match status" value="1"/>
</dbReference>
<dbReference type="PANTHER" id="PTHR10744:SF7">
    <property type="entry name" value="SMALL RIBOSOMAL SUBUNIT PROTEIN US17C"/>
    <property type="match status" value="1"/>
</dbReference>
<dbReference type="Pfam" id="PF00366">
    <property type="entry name" value="Ribosomal_S17"/>
    <property type="match status" value="1"/>
</dbReference>
<dbReference type="PRINTS" id="PR00973">
    <property type="entry name" value="RIBOSOMALS17"/>
</dbReference>
<dbReference type="SUPFAM" id="SSF50249">
    <property type="entry name" value="Nucleic acid-binding proteins"/>
    <property type="match status" value="1"/>
</dbReference>
<dbReference type="PROSITE" id="PS00056">
    <property type="entry name" value="RIBOSOMAL_S17"/>
    <property type="match status" value="1"/>
</dbReference>
<organism>
    <name type="scientific">Arabidopsis thaliana</name>
    <name type="common">Mouse-ear cress</name>
    <dbReference type="NCBI Taxonomy" id="3702"/>
    <lineage>
        <taxon>Eukaryota</taxon>
        <taxon>Viridiplantae</taxon>
        <taxon>Streptophyta</taxon>
        <taxon>Embryophyta</taxon>
        <taxon>Tracheophyta</taxon>
        <taxon>Spermatophyta</taxon>
        <taxon>Magnoliopsida</taxon>
        <taxon>eudicotyledons</taxon>
        <taxon>Gunneridae</taxon>
        <taxon>Pentapetalae</taxon>
        <taxon>rosids</taxon>
        <taxon>malvids</taxon>
        <taxon>Brassicales</taxon>
        <taxon>Brassicaceae</taxon>
        <taxon>Camelineae</taxon>
        <taxon>Arabidopsis</taxon>
    </lineage>
</organism>
<accession>P16180</accession>
<gene>
    <name type="primary">RPS17</name>
    <name type="ordered locus">At1g79850</name>
    <name type="ORF">F19K16.19</name>
</gene>
<comment type="function">
    <text evidence="1 2">One of the primary rRNA binding proteins, it binds specifically to the 5'-end of 16S ribosomal RNA (By similarity). Required for optimal plastid performance in terms of photosynthesis and growth. Required for the translation of plastid mRNAs. Plays a critical role in biosynthesis of thylakoid membrane proteins encoded by chloroplast genes (PubMed:22900828).</text>
</comment>
<comment type="subunit">
    <text>Part of the 30S ribosomal subunit.</text>
</comment>
<comment type="subcellular location">
    <subcellularLocation>
        <location evidence="4">Plastid</location>
        <location evidence="4">Chloroplast</location>
    </subcellularLocation>
</comment>
<comment type="disruption phenotype">
    <text evidence="2">Reduced plant size and pale green leaves.</text>
</comment>
<comment type="similarity">
    <text evidence="4">Belongs to the universal ribosomal protein uS17 family.</text>
</comment>
<comment type="sequence caution" evidence="4">
    <conflict type="erroneous initiation">
        <sequence resource="EMBL-CDS" id="AAA84030"/>
    </conflict>
    <text>Extended N-terminus.</text>
</comment>
<reference key="1">
    <citation type="journal article" date="1990" name="J. Biol. Chem.">
        <title>Plant cytosolic ribosomal protein S11 and chloroplast ribosomal protein CS17. Their primary structures and evolutionary relationships.</title>
        <authorList>
            <person name="Gantt J.S."/>
            <person name="Thompson M.D."/>
        </authorList>
    </citation>
    <scope>NUCLEOTIDE SEQUENCE [MRNA]</scope>
    <source>
        <strain>cv. Columbia</strain>
    </source>
</reference>
<reference key="2">
    <citation type="journal article" date="1992" name="Plant Mol. Biol.">
        <title>Characterization of rps17, rp19 and rpl15: three nucleus-encoded plastid ribosomal protein genes.</title>
        <authorList>
            <person name="Thompson M.D."/>
            <person name="Jacks C.M."/>
            <person name="Lenvik T.R."/>
            <person name="Gantt J.S."/>
        </authorList>
    </citation>
    <scope>NUCLEOTIDE SEQUENCE [GENOMIC DNA]</scope>
    <source>
        <strain>cv. Columbia</strain>
    </source>
</reference>
<reference key="3">
    <citation type="journal article" date="2000" name="Nature">
        <title>Sequence and analysis of chromosome 1 of the plant Arabidopsis thaliana.</title>
        <authorList>
            <person name="Theologis A."/>
            <person name="Ecker J.R."/>
            <person name="Palm C.J."/>
            <person name="Federspiel N.A."/>
            <person name="Kaul S."/>
            <person name="White O."/>
            <person name="Alonso J."/>
            <person name="Altafi H."/>
            <person name="Araujo R."/>
            <person name="Bowman C.L."/>
            <person name="Brooks S.Y."/>
            <person name="Buehler E."/>
            <person name="Chan A."/>
            <person name="Chao Q."/>
            <person name="Chen H."/>
            <person name="Cheuk R.F."/>
            <person name="Chin C.W."/>
            <person name="Chung M.K."/>
            <person name="Conn L."/>
            <person name="Conway A.B."/>
            <person name="Conway A.R."/>
            <person name="Creasy T.H."/>
            <person name="Dewar K."/>
            <person name="Dunn P."/>
            <person name="Etgu P."/>
            <person name="Feldblyum T.V."/>
            <person name="Feng J.-D."/>
            <person name="Fong B."/>
            <person name="Fujii C.Y."/>
            <person name="Gill J.E."/>
            <person name="Goldsmith A.D."/>
            <person name="Haas B."/>
            <person name="Hansen N.F."/>
            <person name="Hughes B."/>
            <person name="Huizar L."/>
            <person name="Hunter J.L."/>
            <person name="Jenkins J."/>
            <person name="Johnson-Hopson C."/>
            <person name="Khan S."/>
            <person name="Khaykin E."/>
            <person name="Kim C.J."/>
            <person name="Koo H.L."/>
            <person name="Kremenetskaia I."/>
            <person name="Kurtz D.B."/>
            <person name="Kwan A."/>
            <person name="Lam B."/>
            <person name="Langin-Hooper S."/>
            <person name="Lee A."/>
            <person name="Lee J.M."/>
            <person name="Lenz C.A."/>
            <person name="Li J.H."/>
            <person name="Li Y.-P."/>
            <person name="Lin X."/>
            <person name="Liu S.X."/>
            <person name="Liu Z.A."/>
            <person name="Luros J.S."/>
            <person name="Maiti R."/>
            <person name="Marziali A."/>
            <person name="Militscher J."/>
            <person name="Miranda M."/>
            <person name="Nguyen M."/>
            <person name="Nierman W.C."/>
            <person name="Osborne B.I."/>
            <person name="Pai G."/>
            <person name="Peterson J."/>
            <person name="Pham P.K."/>
            <person name="Rizzo M."/>
            <person name="Rooney T."/>
            <person name="Rowley D."/>
            <person name="Sakano H."/>
            <person name="Salzberg S.L."/>
            <person name="Schwartz J.R."/>
            <person name="Shinn P."/>
            <person name="Southwick A.M."/>
            <person name="Sun H."/>
            <person name="Tallon L.J."/>
            <person name="Tambunga G."/>
            <person name="Toriumi M.J."/>
            <person name="Town C.D."/>
            <person name="Utterback T."/>
            <person name="Van Aken S."/>
            <person name="Vaysberg M."/>
            <person name="Vysotskaia V.S."/>
            <person name="Walker M."/>
            <person name="Wu D."/>
            <person name="Yu G."/>
            <person name="Fraser C.M."/>
            <person name="Venter J.C."/>
            <person name="Davis R.W."/>
        </authorList>
    </citation>
    <scope>NUCLEOTIDE SEQUENCE [LARGE SCALE GENOMIC DNA]</scope>
    <source>
        <strain>cv. Columbia</strain>
    </source>
</reference>
<reference key="4">
    <citation type="journal article" date="2017" name="Plant J.">
        <title>Araport11: a complete reannotation of the Arabidopsis thaliana reference genome.</title>
        <authorList>
            <person name="Cheng C.Y."/>
            <person name="Krishnakumar V."/>
            <person name="Chan A.P."/>
            <person name="Thibaud-Nissen F."/>
            <person name="Schobel S."/>
            <person name="Town C.D."/>
        </authorList>
    </citation>
    <scope>GENOME REANNOTATION</scope>
    <source>
        <strain>cv. Columbia</strain>
    </source>
</reference>
<reference key="5">
    <citation type="journal article" date="2003" name="Science">
        <title>Empirical analysis of transcriptional activity in the Arabidopsis genome.</title>
        <authorList>
            <person name="Yamada K."/>
            <person name="Lim J."/>
            <person name="Dale J.M."/>
            <person name="Chen H."/>
            <person name="Shinn P."/>
            <person name="Palm C.J."/>
            <person name="Southwick A.M."/>
            <person name="Wu H.C."/>
            <person name="Kim C.J."/>
            <person name="Nguyen M."/>
            <person name="Pham P.K."/>
            <person name="Cheuk R.F."/>
            <person name="Karlin-Newmann G."/>
            <person name="Liu S.X."/>
            <person name="Lam B."/>
            <person name="Sakano H."/>
            <person name="Wu T."/>
            <person name="Yu G."/>
            <person name="Miranda M."/>
            <person name="Quach H.L."/>
            <person name="Tripp M."/>
            <person name="Chang C.H."/>
            <person name="Lee J.M."/>
            <person name="Toriumi M.J."/>
            <person name="Chan M.M."/>
            <person name="Tang C.C."/>
            <person name="Onodera C.S."/>
            <person name="Deng J.M."/>
            <person name="Akiyama K."/>
            <person name="Ansari Y."/>
            <person name="Arakawa T."/>
            <person name="Banh J."/>
            <person name="Banno F."/>
            <person name="Bowser L."/>
            <person name="Brooks S.Y."/>
            <person name="Carninci P."/>
            <person name="Chao Q."/>
            <person name="Choy N."/>
            <person name="Enju A."/>
            <person name="Goldsmith A.D."/>
            <person name="Gurjal M."/>
            <person name="Hansen N.F."/>
            <person name="Hayashizaki Y."/>
            <person name="Johnson-Hopson C."/>
            <person name="Hsuan V.W."/>
            <person name="Iida K."/>
            <person name="Karnes M."/>
            <person name="Khan S."/>
            <person name="Koesema E."/>
            <person name="Ishida J."/>
            <person name="Jiang P.X."/>
            <person name="Jones T."/>
            <person name="Kawai J."/>
            <person name="Kamiya A."/>
            <person name="Meyers C."/>
            <person name="Nakajima M."/>
            <person name="Narusaka M."/>
            <person name="Seki M."/>
            <person name="Sakurai T."/>
            <person name="Satou M."/>
            <person name="Tamse R."/>
            <person name="Vaysberg M."/>
            <person name="Wallender E.K."/>
            <person name="Wong C."/>
            <person name="Yamamura Y."/>
            <person name="Yuan S."/>
            <person name="Shinozaki K."/>
            <person name="Davis R.W."/>
            <person name="Theologis A."/>
            <person name="Ecker J.R."/>
        </authorList>
    </citation>
    <scope>NUCLEOTIDE SEQUENCE [LARGE SCALE MRNA]</scope>
    <source>
        <strain>cv. Columbia</strain>
    </source>
</reference>
<reference key="6">
    <citation type="journal article" date="2009" name="Plant Physiol.">
        <title>Large-scale Arabidopsis phosphoproteome profiling reveals novel chloroplast kinase substrates and phosphorylation networks.</title>
        <authorList>
            <person name="Reiland S."/>
            <person name="Messerli G."/>
            <person name="Baerenfaller K."/>
            <person name="Gerrits B."/>
            <person name="Endler A."/>
            <person name="Grossmann J."/>
            <person name="Gruissem W."/>
            <person name="Baginsky S."/>
        </authorList>
    </citation>
    <scope>IDENTIFICATION BY MASS SPECTROMETRY [LARGE SCALE ANALYSIS]</scope>
</reference>
<reference key="7">
    <citation type="journal article" date="2012" name="Plant J.">
        <title>Versatile roles of Arabidopsis plastid ribosomal proteins in plant growth and development.</title>
        <authorList>
            <person name="Romani I."/>
            <person name="Tadini L."/>
            <person name="Rossi F."/>
            <person name="Masiero S."/>
            <person name="Pribil M."/>
            <person name="Jahns P."/>
            <person name="Kater M."/>
            <person name="Leister D."/>
            <person name="Pesaresi P."/>
        </authorList>
    </citation>
    <scope>FUNCTION</scope>
    <scope>DISRUPTION PHENOTYPE</scope>
</reference>
<reference key="8">
    <citation type="journal article" date="2023" name="Plant Cell">
        <title>An updated nomenclature for plant ribosomal protein genes.</title>
        <authorList>
            <person name="Scarpin M.R."/>
            <person name="Busche M."/>
            <person name="Martinez R.E."/>
            <person name="Harper L.C."/>
            <person name="Reiser L."/>
            <person name="Szakonyi D."/>
            <person name="Merchante C."/>
            <person name="Lan T."/>
            <person name="Xiong W."/>
            <person name="Mo B."/>
            <person name="Tang G."/>
            <person name="Chen X."/>
            <person name="Bailey-Serres J."/>
            <person name="Browning K.S."/>
            <person name="Brunkard J.O."/>
        </authorList>
    </citation>
    <scope>NOMENCLATURE</scope>
</reference>
<keyword id="KW-0150">Chloroplast</keyword>
<keyword id="KW-0934">Plastid</keyword>
<keyword id="KW-1185">Reference proteome</keyword>
<keyword id="KW-0687">Ribonucleoprotein</keyword>
<keyword id="KW-0689">Ribosomal protein</keyword>
<keyword id="KW-0694">RNA-binding</keyword>
<keyword id="KW-0699">rRNA-binding</keyword>
<keyword id="KW-0809">Transit peptide</keyword>